<reference key="1">
    <citation type="journal article" date="2007" name="Proc. Natl. Acad. Sci. U.S.A.">
        <title>Genome plasticity of BCG and impact on vaccine efficacy.</title>
        <authorList>
            <person name="Brosch R."/>
            <person name="Gordon S.V."/>
            <person name="Garnier T."/>
            <person name="Eiglmeier K."/>
            <person name="Frigui W."/>
            <person name="Valenti P."/>
            <person name="Dos Santos S."/>
            <person name="Duthoy S."/>
            <person name="Lacroix C."/>
            <person name="Garcia-Pelayo C."/>
            <person name="Inwald J.K."/>
            <person name="Golby P."/>
            <person name="Garcia J.N."/>
            <person name="Hewinson R.G."/>
            <person name="Behr M.A."/>
            <person name="Quail M.A."/>
            <person name="Churcher C."/>
            <person name="Barrell B.G."/>
            <person name="Parkhill J."/>
            <person name="Cole S.T."/>
        </authorList>
    </citation>
    <scope>NUCLEOTIDE SEQUENCE [LARGE SCALE GENOMIC DNA]</scope>
    <source>
        <strain>BCG / Pasteur 1173P2</strain>
    </source>
</reference>
<name>UNG_MYCBP</name>
<protein>
    <recommendedName>
        <fullName evidence="1">Uracil-DNA glycosylase</fullName>
        <shortName evidence="1">UDG</shortName>
        <ecNumber evidence="1">3.2.2.27</ecNumber>
    </recommendedName>
</protein>
<keyword id="KW-0963">Cytoplasm</keyword>
<keyword id="KW-0227">DNA damage</keyword>
<keyword id="KW-0234">DNA repair</keyword>
<keyword id="KW-0378">Hydrolase</keyword>
<feature type="chain" id="PRO_1000009911" description="Uracil-DNA glycosylase">
    <location>
        <begin position="1"/>
        <end position="227"/>
    </location>
</feature>
<feature type="active site" description="Proton acceptor" evidence="1">
    <location>
        <position position="68"/>
    </location>
</feature>
<accession>A1KMX0</accession>
<gene>
    <name evidence="1" type="primary">ung</name>
    <name type="ordered locus">BCG_2997c</name>
</gene>
<comment type="function">
    <text evidence="1">Excises uracil residues from the DNA which can arise as a result of misincorporation of dUMP residues by DNA polymerase or due to deamination of cytosine.</text>
</comment>
<comment type="catalytic activity">
    <reaction evidence="1">
        <text>Hydrolyzes single-stranded DNA or mismatched double-stranded DNA and polynucleotides, releasing free uracil.</text>
        <dbReference type="EC" id="3.2.2.27"/>
    </reaction>
</comment>
<comment type="subcellular location">
    <subcellularLocation>
        <location evidence="1">Cytoplasm</location>
    </subcellularLocation>
</comment>
<comment type="similarity">
    <text evidence="1">Belongs to the uracil-DNA glycosylase (UDG) superfamily. UNG family.</text>
</comment>
<organism>
    <name type="scientific">Mycobacterium bovis (strain BCG / Pasteur 1173P2)</name>
    <dbReference type="NCBI Taxonomy" id="410289"/>
    <lineage>
        <taxon>Bacteria</taxon>
        <taxon>Bacillati</taxon>
        <taxon>Actinomycetota</taxon>
        <taxon>Actinomycetes</taxon>
        <taxon>Mycobacteriales</taxon>
        <taxon>Mycobacteriaceae</taxon>
        <taxon>Mycobacterium</taxon>
        <taxon>Mycobacterium tuberculosis complex</taxon>
    </lineage>
</organism>
<proteinExistence type="inferred from homology"/>
<evidence type="ECO:0000255" key="1">
    <source>
        <dbReference type="HAMAP-Rule" id="MF_00148"/>
    </source>
</evidence>
<sequence length="227" mass="24481">MTARPLSELVERGWAAALEPVADQVAHMGQFLRAEIAAGRRYLPAGSNVLRAFTFPFDNVRVLIVGQDPYPTPGHAVGLSFSVAPDVRPWPRSLANIFDEYTADLGYPLPSNGDLTPWAQRGVLLLNRVLTVRPSNPASHRGKGWEAVTECAIRALAARAAPLVAILWGRDASTLKPMLAAGNCVAIESPHPSPLSASRGFFGSRPFSRANELLVGMGAEPIDWRLP</sequence>
<dbReference type="EC" id="3.2.2.27" evidence="1"/>
<dbReference type="EMBL" id="AM408590">
    <property type="protein sequence ID" value="CAL72986.1"/>
    <property type="molecule type" value="Genomic_DNA"/>
</dbReference>
<dbReference type="RefSeq" id="WP_003899565.1">
    <property type="nucleotide sequence ID" value="NC_008769.1"/>
</dbReference>
<dbReference type="SMR" id="A1KMX0"/>
<dbReference type="KEGG" id="mbb:BCG_2997c"/>
<dbReference type="HOGENOM" id="CLU_032162_3_1_11"/>
<dbReference type="Proteomes" id="UP000001472">
    <property type="component" value="Chromosome"/>
</dbReference>
<dbReference type="GO" id="GO:0005737">
    <property type="term" value="C:cytoplasm"/>
    <property type="evidence" value="ECO:0007669"/>
    <property type="project" value="UniProtKB-SubCell"/>
</dbReference>
<dbReference type="GO" id="GO:0004844">
    <property type="term" value="F:uracil DNA N-glycosylase activity"/>
    <property type="evidence" value="ECO:0007669"/>
    <property type="project" value="UniProtKB-UniRule"/>
</dbReference>
<dbReference type="GO" id="GO:0097510">
    <property type="term" value="P:base-excision repair, AP site formation via deaminated base removal"/>
    <property type="evidence" value="ECO:0007669"/>
    <property type="project" value="TreeGrafter"/>
</dbReference>
<dbReference type="CDD" id="cd10027">
    <property type="entry name" value="UDG-F1-like"/>
    <property type="match status" value="1"/>
</dbReference>
<dbReference type="FunFam" id="3.40.470.10:FF:000006">
    <property type="entry name" value="Uracil-DNA glycosylase"/>
    <property type="match status" value="1"/>
</dbReference>
<dbReference type="Gene3D" id="3.40.470.10">
    <property type="entry name" value="Uracil-DNA glycosylase-like domain"/>
    <property type="match status" value="1"/>
</dbReference>
<dbReference type="HAMAP" id="MF_00148">
    <property type="entry name" value="UDG"/>
    <property type="match status" value="1"/>
</dbReference>
<dbReference type="InterPro" id="IPR002043">
    <property type="entry name" value="UDG_fam1"/>
</dbReference>
<dbReference type="InterPro" id="IPR018085">
    <property type="entry name" value="Ura-DNA_Glyclase_AS"/>
</dbReference>
<dbReference type="InterPro" id="IPR005122">
    <property type="entry name" value="Uracil-DNA_glycosylase-like"/>
</dbReference>
<dbReference type="InterPro" id="IPR036895">
    <property type="entry name" value="Uracil-DNA_glycosylase-like_sf"/>
</dbReference>
<dbReference type="NCBIfam" id="NF003588">
    <property type="entry name" value="PRK05254.1-1"/>
    <property type="match status" value="1"/>
</dbReference>
<dbReference type="NCBIfam" id="NF003592">
    <property type="entry name" value="PRK05254.1-5"/>
    <property type="match status" value="1"/>
</dbReference>
<dbReference type="NCBIfam" id="TIGR00628">
    <property type="entry name" value="ung"/>
    <property type="match status" value="1"/>
</dbReference>
<dbReference type="PANTHER" id="PTHR11264">
    <property type="entry name" value="URACIL-DNA GLYCOSYLASE"/>
    <property type="match status" value="1"/>
</dbReference>
<dbReference type="PANTHER" id="PTHR11264:SF0">
    <property type="entry name" value="URACIL-DNA GLYCOSYLASE"/>
    <property type="match status" value="1"/>
</dbReference>
<dbReference type="Pfam" id="PF03167">
    <property type="entry name" value="UDG"/>
    <property type="match status" value="1"/>
</dbReference>
<dbReference type="SMART" id="SM00986">
    <property type="entry name" value="UDG"/>
    <property type="match status" value="1"/>
</dbReference>
<dbReference type="SMART" id="SM00987">
    <property type="entry name" value="UreE_C"/>
    <property type="match status" value="1"/>
</dbReference>
<dbReference type="SUPFAM" id="SSF52141">
    <property type="entry name" value="Uracil-DNA glycosylase-like"/>
    <property type="match status" value="1"/>
</dbReference>
<dbReference type="PROSITE" id="PS00130">
    <property type="entry name" value="U_DNA_GLYCOSYLASE"/>
    <property type="match status" value="1"/>
</dbReference>